<name>Y1413_CAMLR</name>
<dbReference type="EMBL" id="CP000932">
    <property type="protein sequence ID" value="ACM64728.1"/>
    <property type="molecule type" value="Genomic_DNA"/>
</dbReference>
<dbReference type="RefSeq" id="WP_012662111.1">
    <property type="nucleotide sequence ID" value="NC_012039.1"/>
</dbReference>
<dbReference type="RefSeq" id="WP_012662112.1">
    <property type="nucleotide sequence ID" value="NC_012039.1"/>
</dbReference>
<dbReference type="SMR" id="B9KDU0"/>
<dbReference type="STRING" id="306263.Cla_1413"/>
<dbReference type="KEGG" id="cla:CLA_1413"/>
<dbReference type="PATRIC" id="fig|306263.5.peg.1399"/>
<dbReference type="eggNOG" id="COG0792">
    <property type="taxonomic scope" value="Bacteria"/>
</dbReference>
<dbReference type="HOGENOM" id="CLU_115353_3_2_7"/>
<dbReference type="Proteomes" id="UP000007727">
    <property type="component" value="Chromosome"/>
</dbReference>
<dbReference type="GO" id="GO:0003676">
    <property type="term" value="F:nucleic acid binding"/>
    <property type="evidence" value="ECO:0007669"/>
    <property type="project" value="InterPro"/>
</dbReference>
<dbReference type="Gene3D" id="3.40.1350.10">
    <property type="match status" value="1"/>
</dbReference>
<dbReference type="HAMAP" id="MF_00048">
    <property type="entry name" value="UPF0102"/>
    <property type="match status" value="1"/>
</dbReference>
<dbReference type="InterPro" id="IPR011335">
    <property type="entry name" value="Restrct_endonuc-II-like"/>
</dbReference>
<dbReference type="InterPro" id="IPR011856">
    <property type="entry name" value="tRNA_endonuc-like_dom_sf"/>
</dbReference>
<dbReference type="InterPro" id="IPR003509">
    <property type="entry name" value="UPF0102_YraN-like"/>
</dbReference>
<dbReference type="NCBIfam" id="NF009152">
    <property type="entry name" value="PRK12497.2-4"/>
    <property type="match status" value="1"/>
</dbReference>
<dbReference type="PANTHER" id="PTHR34039">
    <property type="entry name" value="UPF0102 PROTEIN YRAN"/>
    <property type="match status" value="1"/>
</dbReference>
<dbReference type="PANTHER" id="PTHR34039:SF1">
    <property type="entry name" value="UPF0102 PROTEIN YRAN"/>
    <property type="match status" value="1"/>
</dbReference>
<dbReference type="Pfam" id="PF02021">
    <property type="entry name" value="UPF0102"/>
    <property type="match status" value="1"/>
</dbReference>
<dbReference type="SUPFAM" id="SSF52980">
    <property type="entry name" value="Restriction endonuclease-like"/>
    <property type="match status" value="1"/>
</dbReference>
<accession>B9KDU0</accession>
<sequence length="112" mass="13375">MALSQYLFGIKGEDIACEYLKNKDFEILERNFHSKFGEIDIIAKKDKILHFIEVKSTQGNYEVAYRLDGKKYNKIIKTIEYYFMKHKSNENFQLDLLCVYKDDIKLLENISY</sequence>
<keyword id="KW-1185">Reference proteome</keyword>
<gene>
    <name type="ordered locus">Cla_1413</name>
</gene>
<reference key="1">
    <citation type="journal article" date="2008" name="Foodborne Pathog. Dis.">
        <title>The complete genome sequence and analysis of the human pathogen Campylobacter lari.</title>
        <authorList>
            <person name="Miller W.G."/>
            <person name="Wang G."/>
            <person name="Binnewies T.T."/>
            <person name="Parker C.T."/>
        </authorList>
    </citation>
    <scope>NUCLEOTIDE SEQUENCE [LARGE SCALE GENOMIC DNA]</scope>
    <source>
        <strain>RM2100 / D67 / ATCC BAA-1060</strain>
    </source>
</reference>
<comment type="similarity">
    <text evidence="1">Belongs to the UPF0102 family.</text>
</comment>
<organism>
    <name type="scientific">Campylobacter lari (strain RM2100 / D67 / ATCC BAA-1060)</name>
    <dbReference type="NCBI Taxonomy" id="306263"/>
    <lineage>
        <taxon>Bacteria</taxon>
        <taxon>Pseudomonadati</taxon>
        <taxon>Campylobacterota</taxon>
        <taxon>Epsilonproteobacteria</taxon>
        <taxon>Campylobacterales</taxon>
        <taxon>Campylobacteraceae</taxon>
        <taxon>Campylobacter</taxon>
    </lineage>
</organism>
<proteinExistence type="inferred from homology"/>
<feature type="chain" id="PRO_1000200129" description="UPF0102 protein Cla_1413">
    <location>
        <begin position="1"/>
        <end position="112"/>
    </location>
</feature>
<protein>
    <recommendedName>
        <fullName evidence="1">UPF0102 protein Cla_1413</fullName>
    </recommendedName>
</protein>
<evidence type="ECO:0000255" key="1">
    <source>
        <dbReference type="HAMAP-Rule" id="MF_00048"/>
    </source>
</evidence>